<sequence length="380" mass="43578">MSWSFLTRLLDEISNHSTFVGKIWLTLFIIFRIVLTVVGGESIYYDEQSKFVCNTQQPGCENVCYDAFAPLSHVRFWVFQIILITTPTIMYLGFAMHKIARSNDVEYRPVNRKRMPMINRGRNRDYEEAEDNGEEDPMIMEEIVPEKEKAPEKSAVKHDGRRRIKRDGLMKVYILQLLSRIIFEVGFLFGQYILYGFEVAPSYVCTRSPCPHTVDCFVSRPTEKTIFLLIMYAVSCLCLSLTVLEILHLGLSGIRDAFRRRARHQSVQRPRAPICRQVPTAPPGYHTALKKDKLSLGMKPEYNLDSGRESFGDESSSRDIDRLRRHLKLAQQHLDLAYQNGESSPSRSSSPESNGTAVEQNRLNFAQEKQGSKCEKGIHA</sequence>
<evidence type="ECO:0000255" key="1"/>
<evidence type="ECO:0000256" key="2">
    <source>
        <dbReference type="SAM" id="MobiDB-lite"/>
    </source>
</evidence>
<evidence type="ECO:0000305" key="3"/>
<keyword id="KW-0965">Cell junction</keyword>
<keyword id="KW-1003">Cell membrane</keyword>
<keyword id="KW-0303">Gap junction</keyword>
<keyword id="KW-0472">Membrane</keyword>
<keyword id="KW-1185">Reference proteome</keyword>
<keyword id="KW-0812">Transmembrane</keyword>
<keyword id="KW-1133">Transmembrane helix</keyword>
<reference key="1">
    <citation type="submission" date="1996-03" db="EMBL/GenBank/DDBJ databases">
        <authorList>
            <person name="Marics I."/>
        </authorList>
    </citation>
    <scope>NUCLEOTIDE SEQUENCE [MRNA]</scope>
    <source>
        <tissue>Embryo</tissue>
    </source>
</reference>
<reference key="2">
    <citation type="journal article" date="1996" name="Dev. Biol.">
        <title>Expression of zebrafish connexin43.4 in the notochord and tail bud of wild-type and mutant no tail embryos.</title>
        <authorList>
            <person name="Essner J.J."/>
            <person name="Laing J.G."/>
            <person name="Beyer E.C."/>
            <person name="Johnson R.G."/>
            <person name="Hackett P.B. Jr."/>
        </authorList>
    </citation>
    <scope>NUCLEOTIDE SEQUENCE [MRNA]</scope>
    <source>
        <tissue>Embryo</tissue>
    </source>
</reference>
<feature type="chain" id="PRO_0000057829" description="Gap junction gamma-1 protein">
    <location>
        <begin position="1"/>
        <end position="380"/>
    </location>
</feature>
<feature type="topological domain" description="Cytoplasmic" evidence="1">
    <location>
        <begin position="1"/>
        <end position="22"/>
    </location>
</feature>
<feature type="transmembrane region" description="Helical" evidence="1">
    <location>
        <begin position="23"/>
        <end position="45"/>
    </location>
</feature>
<feature type="topological domain" description="Extracellular" evidence="1">
    <location>
        <begin position="46"/>
        <end position="75"/>
    </location>
</feature>
<feature type="transmembrane region" description="Helical" evidence="1">
    <location>
        <begin position="76"/>
        <end position="95"/>
    </location>
</feature>
<feature type="topological domain" description="Cytoplasmic" evidence="1">
    <location>
        <begin position="96"/>
        <end position="171"/>
    </location>
</feature>
<feature type="transmembrane region" description="Helical" evidence="1">
    <location>
        <begin position="172"/>
        <end position="194"/>
    </location>
</feature>
<feature type="topological domain" description="Extracellular" evidence="1">
    <location>
        <begin position="195"/>
        <end position="228"/>
    </location>
</feature>
<feature type="transmembrane region" description="Helical" evidence="1">
    <location>
        <begin position="229"/>
        <end position="251"/>
    </location>
</feature>
<feature type="topological domain" description="Cytoplasmic" evidence="1">
    <location>
        <begin position="252"/>
        <end position="380"/>
    </location>
</feature>
<feature type="region of interest" description="Disordered" evidence="2">
    <location>
        <begin position="337"/>
        <end position="380"/>
    </location>
</feature>
<feature type="compositionally biased region" description="Low complexity" evidence="2">
    <location>
        <begin position="342"/>
        <end position="353"/>
    </location>
</feature>
<feature type="compositionally biased region" description="Polar residues" evidence="2">
    <location>
        <begin position="354"/>
        <end position="369"/>
    </location>
</feature>
<feature type="compositionally biased region" description="Basic and acidic residues" evidence="2">
    <location>
        <begin position="370"/>
        <end position="380"/>
    </location>
</feature>
<feature type="sequence conflict" description="In Ref. 2; AAB36619." evidence="3" ref="2">
    <original>R</original>
    <variation>A</variation>
    <location>
        <position position="122"/>
    </location>
</feature>
<feature type="sequence conflict" description="In Ref. 2; AAB36619." evidence="3" ref="2">
    <original>R</original>
    <variation>P</variation>
    <location>
        <position position="207"/>
    </location>
</feature>
<gene>
    <name type="primary">gjc1</name>
    <name type="synonym">cx43.4</name>
    <name type="synonym">gja7</name>
</gene>
<comment type="function">
    <text>One gap junction consists of a cluster of closely packed pairs of transmembrane channels, the connexons, through which materials of low MW diffuse from one cell to a neighboring cell. Participates in a developmental pathway for formation of the notochord and tail.</text>
</comment>
<comment type="subunit">
    <text>A connexon is composed of a hexamer of connexins.</text>
</comment>
<comment type="subcellular location">
    <subcellularLocation>
        <location>Cell membrane</location>
        <topology>Multi-pass membrane protein</topology>
    </subcellularLocation>
    <subcellularLocation>
        <location>Cell junction</location>
        <location>Gap junction</location>
    </subcellularLocation>
</comment>
<comment type="similarity">
    <text evidence="3">Belongs to the connexin family. Gamma-type subfamily.</text>
</comment>
<dbReference type="EMBL" id="X96712">
    <property type="protein sequence ID" value="CAA65473.1"/>
    <property type="molecule type" value="mRNA"/>
</dbReference>
<dbReference type="EMBL" id="L46801">
    <property type="protein sequence ID" value="AAB36619.1"/>
    <property type="molecule type" value="mRNA"/>
</dbReference>
<dbReference type="SMR" id="Q92052"/>
<dbReference type="FunCoup" id="Q92052">
    <property type="interactions" value="23"/>
</dbReference>
<dbReference type="STRING" id="7955.ENSDARP00000015225"/>
<dbReference type="PaxDb" id="7955-ENSDARP00000015225"/>
<dbReference type="AGR" id="ZFIN:ZDB-GENE-990415-38"/>
<dbReference type="ZFIN" id="ZDB-GENE-990415-38">
    <property type="gene designation" value="gjc4b"/>
</dbReference>
<dbReference type="eggNOG" id="ENOG502QVY2">
    <property type="taxonomic scope" value="Eukaryota"/>
</dbReference>
<dbReference type="InParanoid" id="Q92052"/>
<dbReference type="PhylomeDB" id="Q92052"/>
<dbReference type="PRO" id="PR:Q92052"/>
<dbReference type="Proteomes" id="UP000000437">
    <property type="component" value="Unplaced"/>
</dbReference>
<dbReference type="GO" id="GO:0005922">
    <property type="term" value="C:connexin complex"/>
    <property type="evidence" value="ECO:0000318"/>
    <property type="project" value="GO_Central"/>
</dbReference>
<dbReference type="GO" id="GO:0005243">
    <property type="term" value="F:gap junction channel activity"/>
    <property type="evidence" value="ECO:0000318"/>
    <property type="project" value="GO_Central"/>
</dbReference>
<dbReference type="GO" id="GO:0007267">
    <property type="term" value="P:cell-cell signaling"/>
    <property type="evidence" value="ECO:0000318"/>
    <property type="project" value="GO_Central"/>
</dbReference>
<dbReference type="Gene3D" id="1.20.1440.80">
    <property type="entry name" value="Gap junction channel protein cysteine-rich domain"/>
    <property type="match status" value="1"/>
</dbReference>
<dbReference type="InterPro" id="IPR000500">
    <property type="entry name" value="Connexin"/>
</dbReference>
<dbReference type="InterPro" id="IPR019570">
    <property type="entry name" value="Connexin_CCC"/>
</dbReference>
<dbReference type="InterPro" id="IPR017990">
    <property type="entry name" value="Connexin_CS"/>
</dbReference>
<dbReference type="InterPro" id="IPR013092">
    <property type="entry name" value="Connexin_N"/>
</dbReference>
<dbReference type="InterPro" id="IPR038359">
    <property type="entry name" value="Connexin_N_sf"/>
</dbReference>
<dbReference type="PANTHER" id="PTHR11984">
    <property type="entry name" value="CONNEXIN"/>
    <property type="match status" value="1"/>
</dbReference>
<dbReference type="PANTHER" id="PTHR11984:SF117">
    <property type="entry name" value="GAP JUNCTION PROTEIN"/>
    <property type="match status" value="1"/>
</dbReference>
<dbReference type="Pfam" id="PF00029">
    <property type="entry name" value="Connexin"/>
    <property type="match status" value="1"/>
</dbReference>
<dbReference type="PRINTS" id="PR00206">
    <property type="entry name" value="CONNEXIN"/>
</dbReference>
<dbReference type="SMART" id="SM00037">
    <property type="entry name" value="CNX"/>
    <property type="match status" value="1"/>
</dbReference>
<dbReference type="SMART" id="SM01089">
    <property type="entry name" value="Connexin_CCC"/>
    <property type="match status" value="1"/>
</dbReference>
<dbReference type="PROSITE" id="PS00407">
    <property type="entry name" value="CONNEXINS_1"/>
    <property type="match status" value="1"/>
</dbReference>
<dbReference type="PROSITE" id="PS00408">
    <property type="entry name" value="CONNEXINS_2"/>
    <property type="match status" value="1"/>
</dbReference>
<protein>
    <recommendedName>
        <fullName>Gap junction gamma-1 protein</fullName>
    </recommendedName>
    <alternativeName>
        <fullName>Connexin-43.4</fullName>
        <shortName>Cx43.4</shortName>
    </alternativeName>
    <alternativeName>
        <fullName>Gap junction alpha-7 protein</fullName>
    </alternativeName>
</protein>
<organism>
    <name type="scientific">Danio rerio</name>
    <name type="common">Zebrafish</name>
    <name type="synonym">Brachydanio rerio</name>
    <dbReference type="NCBI Taxonomy" id="7955"/>
    <lineage>
        <taxon>Eukaryota</taxon>
        <taxon>Metazoa</taxon>
        <taxon>Chordata</taxon>
        <taxon>Craniata</taxon>
        <taxon>Vertebrata</taxon>
        <taxon>Euteleostomi</taxon>
        <taxon>Actinopterygii</taxon>
        <taxon>Neopterygii</taxon>
        <taxon>Teleostei</taxon>
        <taxon>Ostariophysi</taxon>
        <taxon>Cypriniformes</taxon>
        <taxon>Danionidae</taxon>
        <taxon>Danioninae</taxon>
        <taxon>Danio</taxon>
    </lineage>
</organism>
<accession>Q92052</accession>
<accession>Q92053</accession>
<name>CXG1_DANRE</name>
<proteinExistence type="evidence at transcript level"/>